<sequence length="172" mass="19122">MSEAEFHEMRDPRIEKVVVHMGVGEGGRELAKSEDILEEITGQESVRTISGRASQDFGVRQGEPVGAKVTLRGESAVEFLETALPITDLSASSFDETGNFGFGVEEHTEFPSQEYDPQIGIYGLDVTVNIVRPGYRVKKRDKRSRQIPSSHRMTVEDAVAFIESTFDVEVEE</sequence>
<name>RL5_HALMT</name>
<accession>P50557</accession>
<accession>I3R7P6</accession>
<dbReference type="EMBL" id="CP001868">
    <property type="protein sequence ID" value="AFK20256.1"/>
    <property type="molecule type" value="Genomic_DNA"/>
</dbReference>
<dbReference type="PIR" id="G33084">
    <property type="entry name" value="G33084"/>
</dbReference>
<dbReference type="RefSeq" id="WP_004060022.1">
    <property type="nucleotide sequence ID" value="NC_017941.2"/>
</dbReference>
<dbReference type="SMR" id="P50557"/>
<dbReference type="STRING" id="523841.HFX_2575"/>
<dbReference type="PaxDb" id="523841-HFX_2575"/>
<dbReference type="GeneID" id="40157532"/>
<dbReference type="KEGG" id="hme:HFX_2575"/>
<dbReference type="eggNOG" id="arCOG04092">
    <property type="taxonomic scope" value="Archaea"/>
</dbReference>
<dbReference type="HOGENOM" id="CLU_061015_3_0_2"/>
<dbReference type="OrthoDB" id="372044at2157"/>
<dbReference type="Proteomes" id="UP000006469">
    <property type="component" value="Chromosome"/>
</dbReference>
<dbReference type="GO" id="GO:1990904">
    <property type="term" value="C:ribonucleoprotein complex"/>
    <property type="evidence" value="ECO:0007669"/>
    <property type="project" value="UniProtKB-KW"/>
</dbReference>
<dbReference type="GO" id="GO:0005840">
    <property type="term" value="C:ribosome"/>
    <property type="evidence" value="ECO:0007669"/>
    <property type="project" value="UniProtKB-KW"/>
</dbReference>
<dbReference type="GO" id="GO:0019843">
    <property type="term" value="F:rRNA binding"/>
    <property type="evidence" value="ECO:0007669"/>
    <property type="project" value="UniProtKB-UniRule"/>
</dbReference>
<dbReference type="GO" id="GO:0003735">
    <property type="term" value="F:structural constituent of ribosome"/>
    <property type="evidence" value="ECO:0007669"/>
    <property type="project" value="InterPro"/>
</dbReference>
<dbReference type="GO" id="GO:0000049">
    <property type="term" value="F:tRNA binding"/>
    <property type="evidence" value="ECO:0007669"/>
    <property type="project" value="UniProtKB-UniRule"/>
</dbReference>
<dbReference type="GO" id="GO:0006412">
    <property type="term" value="P:translation"/>
    <property type="evidence" value="ECO:0007669"/>
    <property type="project" value="UniProtKB-UniRule"/>
</dbReference>
<dbReference type="FunFam" id="3.30.1440.10:FF:000002">
    <property type="entry name" value="60S ribosomal protein L11"/>
    <property type="match status" value="1"/>
</dbReference>
<dbReference type="Gene3D" id="3.30.1440.10">
    <property type="match status" value="1"/>
</dbReference>
<dbReference type="HAMAP" id="MF_01333_A">
    <property type="entry name" value="Ribosomal_uL5_A"/>
    <property type="match status" value="1"/>
</dbReference>
<dbReference type="InterPro" id="IPR002132">
    <property type="entry name" value="Ribosomal_uL5"/>
</dbReference>
<dbReference type="InterPro" id="IPR022804">
    <property type="entry name" value="Ribosomal_uL5_arc"/>
</dbReference>
<dbReference type="InterPro" id="IPR031309">
    <property type="entry name" value="Ribosomal_uL5_C"/>
</dbReference>
<dbReference type="InterPro" id="IPR022803">
    <property type="entry name" value="Ribosomal_uL5_dom_sf"/>
</dbReference>
<dbReference type="InterPro" id="IPR031310">
    <property type="entry name" value="Ribosomal_uL5_N"/>
</dbReference>
<dbReference type="NCBIfam" id="NF003258">
    <property type="entry name" value="PRK04219.1"/>
    <property type="match status" value="1"/>
</dbReference>
<dbReference type="PANTHER" id="PTHR11994">
    <property type="entry name" value="60S RIBOSOMAL PROTEIN L11-RELATED"/>
    <property type="match status" value="1"/>
</dbReference>
<dbReference type="Pfam" id="PF00281">
    <property type="entry name" value="Ribosomal_L5"/>
    <property type="match status" value="1"/>
</dbReference>
<dbReference type="Pfam" id="PF00673">
    <property type="entry name" value="Ribosomal_L5_C"/>
    <property type="match status" value="1"/>
</dbReference>
<dbReference type="PIRSF" id="PIRSF002161">
    <property type="entry name" value="Ribosomal_L5"/>
    <property type="match status" value="1"/>
</dbReference>
<dbReference type="SUPFAM" id="SSF55282">
    <property type="entry name" value="RL5-like"/>
    <property type="match status" value="1"/>
</dbReference>
<proteinExistence type="evidence at protein level"/>
<gene>
    <name evidence="1" type="primary">rpl5</name>
    <name type="ordered locus">HFX_2575</name>
</gene>
<protein>
    <recommendedName>
        <fullName evidence="1">Large ribosomal subunit protein uL5</fullName>
    </recommendedName>
    <alternativeName>
        <fullName evidence="3">50S ribosomal protein L5</fullName>
    </alternativeName>
    <alternativeName>
        <fullName>HmeL5</fullName>
    </alternativeName>
</protein>
<keyword id="KW-0903">Direct protein sequencing</keyword>
<keyword id="KW-0687">Ribonucleoprotein</keyword>
<keyword id="KW-0689">Ribosomal protein</keyword>
<keyword id="KW-0694">RNA-binding</keyword>
<keyword id="KW-0699">rRNA-binding</keyword>
<keyword id="KW-0820">tRNA-binding</keyword>
<feature type="initiator methionine" description="Removed" evidence="2">
    <location>
        <position position="1"/>
    </location>
</feature>
<feature type="chain" id="PRO_0000125052" description="Large ribosomal subunit protein uL5">
    <location>
        <begin position="2"/>
        <end position="172"/>
    </location>
</feature>
<comment type="function">
    <text evidence="1">This is one of the proteins that bind and probably mediate the attachment of the 5S RNA into the large ribosomal subunit, where it forms part of the central protuberance. In the 70S ribosome it contacts protein S13 of the 30S subunit (bridge B1b), connecting the 2 subunits; this bridge is implicated in subunit movement. May contact the P site tRNA; the 5S rRNA and some of its associated proteins might help stabilize positioning of ribosome-bound tRNAs.</text>
</comment>
<comment type="subunit">
    <text evidence="1">Part of the 50S ribosomal subunit; contacts the 5S rRNA and probably tRNA. Forms a bridge to the 30S subunit in the 70S ribosome.</text>
</comment>
<comment type="similarity">
    <text evidence="1">Belongs to the universal ribosomal protein uL5 family.</text>
</comment>
<reference key="1">
    <citation type="journal article" date="2012" name="J. Bacteriol.">
        <title>Complete genome sequence of the metabolically versatile halophilic archaeon Haloferax mediterranei, a poly(3-hydroxybutyrate-co-3-hydroxyvalerate) producer.</title>
        <authorList>
            <person name="Han J."/>
            <person name="Zhang F."/>
            <person name="Hou J."/>
            <person name="Liu X."/>
            <person name="Li M."/>
            <person name="Liu H."/>
            <person name="Cai L."/>
            <person name="Zhang B."/>
            <person name="Chen Y."/>
            <person name="Zhou J."/>
            <person name="Hu S."/>
            <person name="Xiang H."/>
        </authorList>
    </citation>
    <scope>NUCLEOTIDE SEQUENCE [LARGE SCALE GENOMIC DNA]</scope>
    <source>
        <strain>ATCC 33500 / DSM 1411 / JCM 8866 / NBRC 14739 / NCIMB 2177 / R-4</strain>
    </source>
</reference>
<reference key="2">
    <citation type="journal article" date="1994" name="Eur. J. Biochem.">
        <title>Comparative analysis of the protein components from 5S rRNA.protein complexes of halophilic archaebacteria.</title>
        <authorList>
            <person name="McDougall J."/>
            <person name="Wittmann-Liebold B."/>
        </authorList>
    </citation>
    <scope>PROTEIN SEQUENCE OF 2-22</scope>
    <source>
        <strain>ATCC 33500 / DSM 1411 / JCM 8866 / NBRC 14739 / NCIMB 2177 / R-4</strain>
    </source>
</reference>
<organism>
    <name type="scientific">Haloferax mediterranei (strain ATCC 33500 / DSM 1411 / JCM 8866 / NBRC 14739 / NCIMB 2177 / R-4)</name>
    <name type="common">Halobacterium mediterranei</name>
    <dbReference type="NCBI Taxonomy" id="523841"/>
    <lineage>
        <taxon>Archaea</taxon>
        <taxon>Methanobacteriati</taxon>
        <taxon>Methanobacteriota</taxon>
        <taxon>Stenosarchaea group</taxon>
        <taxon>Halobacteria</taxon>
        <taxon>Halobacteriales</taxon>
        <taxon>Haloferacaceae</taxon>
        <taxon>Haloferax</taxon>
    </lineage>
</organism>
<evidence type="ECO:0000255" key="1">
    <source>
        <dbReference type="HAMAP-Rule" id="MF_01333"/>
    </source>
</evidence>
<evidence type="ECO:0000269" key="2">
    <source>
    </source>
</evidence>
<evidence type="ECO:0000305" key="3"/>